<name>LUKEV_STAA8</name>
<gene>
    <name type="primary">lukEv</name>
    <name type="ordered locus">SAOUHSC_01955</name>
</gene>
<sequence length="306" mass="34156">MLAATLSVGLIAPLASPIQESRANTNIENIGDGAEVIKRTEDVSSKKWGVTQNVQFDFVKDKKYNKDALIVKMQGFINSRTSFSDVKGSGYELTKRMIWPFQYNIGLTTKDPNVSLINYLPKNKIETTDVGQTLGYNIGGNFQSAPSIGGNGSFNYSKTISYTQKSYVSEVDKQNSKSVKWGVKANEFVTPDGKKSAHDRYLFVQSPNGPTGSAREYFAPDNQLPPLVQSGFNPSFITTLSHEKGSSDTSEFEISYGRNLDITYATLFPRTGIYAERKHNAFVNRNFVVRYEVNWKTHEIKVKGHN</sequence>
<accession>Q2FXB0</accession>
<evidence type="ECO:0000250" key="1"/>
<evidence type="ECO:0000255" key="2"/>
<evidence type="ECO:0000269" key="3">
    <source>
    </source>
</evidence>
<evidence type="ECO:0000305" key="4"/>
<evidence type="ECO:0007829" key="5">
    <source>
        <dbReference type="PDB" id="3ROH"/>
    </source>
</evidence>
<evidence type="ECO:0007829" key="6">
    <source>
        <dbReference type="PDB" id="7P8S"/>
    </source>
</evidence>
<evidence type="ECO:0007829" key="7">
    <source>
        <dbReference type="PDB" id="7P8T"/>
    </source>
</evidence>
<evidence type="ECO:0007829" key="8">
    <source>
        <dbReference type="PDB" id="7P8X"/>
    </source>
</evidence>
<evidence type="ECO:0007829" key="9">
    <source>
        <dbReference type="PDB" id="7T82"/>
    </source>
</evidence>
<organism>
    <name type="scientific">Staphylococcus aureus (strain NCTC 8325 / PS 47)</name>
    <dbReference type="NCBI Taxonomy" id="93061"/>
    <lineage>
        <taxon>Bacteria</taxon>
        <taxon>Bacillati</taxon>
        <taxon>Bacillota</taxon>
        <taxon>Bacilli</taxon>
        <taxon>Bacillales</taxon>
        <taxon>Staphylococcaceae</taxon>
        <taxon>Staphylococcus</taxon>
    </lineage>
</organism>
<reference key="1">
    <citation type="book" date="2006" name="Gram positive pathogens, 2nd edition">
        <title>The Staphylococcus aureus NCTC 8325 genome.</title>
        <editorList>
            <person name="Fischetti V."/>
            <person name="Novick R."/>
            <person name="Ferretti J."/>
            <person name="Portnoy D."/>
            <person name="Rood J."/>
        </editorList>
        <authorList>
            <person name="Gillaspy A.F."/>
            <person name="Worrell V."/>
            <person name="Orvis J."/>
            <person name="Roe B.A."/>
            <person name="Dyer D.W."/>
            <person name="Iandolo J.J."/>
        </authorList>
    </citation>
    <scope>NUCLEOTIDE SEQUENCE [LARGE SCALE GENOMIC DNA]</scope>
    <source>
        <strain>NCTC 8325 / PS 47</strain>
    </source>
</reference>
<reference key="2">
    <citation type="journal article" date="2003" name="Microbiol. Immunol.">
        <title>Purification, cloning and characterization of variant LukE-LukD with strong leukocidal activity of staphylococcal bi-component leukotoxin family.</title>
        <authorList>
            <person name="Morinaga N."/>
            <person name="Kaihou Y."/>
            <person name="Noda M."/>
        </authorList>
    </citation>
    <scope>FUNCTION</scope>
    <scope>SUBUNIT</scope>
    <source>
        <strain>ATCC 27733 / V8</strain>
    </source>
</reference>
<reference key="3">
    <citation type="journal article" date="2004" name="Biosci. Biotechnol. Biochem.">
        <title>Bacterial two-component and hetero-heptameric pore-forming cytolytic toxins: structures, pore-forming mechanism, and organization of the genes.</title>
        <authorList>
            <person name="Kaneko J."/>
            <person name="Kamio Y."/>
        </authorList>
    </citation>
    <scope>SIMILARITY TO LUKEV</scope>
</reference>
<feature type="signal peptide" evidence="2">
    <location>
        <begin position="1"/>
        <end position="23"/>
    </location>
</feature>
<feature type="chain" id="PRO_0000419805" description="Leucotoxin LukEv">
    <location>
        <begin position="24"/>
        <end position="306"/>
    </location>
</feature>
<feature type="helix" evidence="6">
    <location>
        <begin position="9"/>
        <end position="11"/>
    </location>
</feature>
<feature type="strand" evidence="8">
    <location>
        <begin position="25"/>
        <end position="31"/>
    </location>
</feature>
<feature type="strand" evidence="8">
    <location>
        <begin position="34"/>
        <end position="45"/>
    </location>
</feature>
<feature type="turn" evidence="8">
    <location>
        <begin position="46"/>
        <end position="49"/>
    </location>
</feature>
<feature type="strand" evidence="8">
    <location>
        <begin position="50"/>
        <end position="61"/>
    </location>
</feature>
<feature type="strand" evidence="8">
    <location>
        <begin position="65"/>
        <end position="78"/>
    </location>
</feature>
<feature type="strand" evidence="8">
    <location>
        <begin position="82"/>
        <end position="85"/>
    </location>
</feature>
<feature type="helix" evidence="9">
    <location>
        <begin position="91"/>
        <end position="93"/>
    </location>
</feature>
<feature type="strand" evidence="8">
    <location>
        <begin position="94"/>
        <end position="109"/>
    </location>
</feature>
<feature type="strand" evidence="8">
    <location>
        <begin position="115"/>
        <end position="121"/>
    </location>
</feature>
<feature type="strand" evidence="8">
    <location>
        <begin position="127"/>
        <end position="137"/>
    </location>
</feature>
<feature type="turn" evidence="8">
    <location>
        <begin position="138"/>
        <end position="140"/>
    </location>
</feature>
<feature type="strand" evidence="8">
    <location>
        <begin position="141"/>
        <end position="149"/>
    </location>
</feature>
<feature type="strand" evidence="8">
    <location>
        <begin position="155"/>
        <end position="163"/>
    </location>
</feature>
<feature type="strand" evidence="8">
    <location>
        <begin position="167"/>
        <end position="185"/>
    </location>
</feature>
<feature type="strand" evidence="8">
    <location>
        <begin position="187"/>
        <end position="190"/>
    </location>
</feature>
<feature type="strand" evidence="8">
    <location>
        <begin position="193"/>
        <end position="196"/>
    </location>
</feature>
<feature type="turn" evidence="8">
    <location>
        <begin position="200"/>
        <end position="203"/>
    </location>
</feature>
<feature type="strand" evidence="7">
    <location>
        <begin position="210"/>
        <end position="212"/>
    </location>
</feature>
<feature type="helix" evidence="8">
    <location>
        <begin position="214"/>
        <end position="217"/>
    </location>
</feature>
<feature type="helix" evidence="8">
    <location>
        <begin position="221"/>
        <end position="223"/>
    </location>
</feature>
<feature type="helix" evidence="8">
    <location>
        <begin position="226"/>
        <end position="229"/>
    </location>
</feature>
<feature type="strand" evidence="8">
    <location>
        <begin position="236"/>
        <end position="243"/>
    </location>
</feature>
<feature type="strand" evidence="5">
    <location>
        <begin position="244"/>
        <end position="246"/>
    </location>
</feature>
<feature type="strand" evidence="8">
    <location>
        <begin position="248"/>
        <end position="268"/>
    </location>
</feature>
<feature type="turn" evidence="8">
    <location>
        <begin position="269"/>
        <end position="271"/>
    </location>
</feature>
<feature type="strand" evidence="8">
    <location>
        <begin position="272"/>
        <end position="294"/>
    </location>
</feature>
<feature type="turn" evidence="8">
    <location>
        <begin position="295"/>
        <end position="298"/>
    </location>
</feature>
<feature type="strand" evidence="8">
    <location>
        <begin position="299"/>
        <end position="303"/>
    </location>
</feature>
<protein>
    <recommendedName>
        <fullName>Leucotoxin LukEv</fullName>
    </recommendedName>
    <alternativeName>
        <fullName>Variant of LukE</fullName>
    </alternativeName>
</protein>
<dbReference type="EMBL" id="CP000253">
    <property type="protein sequence ID" value="ABD31016.1"/>
    <property type="status" value="ALT_INIT"/>
    <property type="molecule type" value="Genomic_DNA"/>
</dbReference>
<dbReference type="RefSeq" id="YP_500454.1">
    <property type="nucleotide sequence ID" value="NC_007795.1"/>
</dbReference>
<dbReference type="PDB" id="3ROH">
    <property type="method" value="X-ray"/>
    <property type="resolution" value="3.20 A"/>
    <property type="chains" value="A=1-306"/>
</dbReference>
<dbReference type="PDB" id="7P8S">
    <property type="method" value="X-ray"/>
    <property type="resolution" value="1.90 A"/>
    <property type="chains" value="A=6-306"/>
</dbReference>
<dbReference type="PDB" id="7P8T">
    <property type="method" value="X-ray"/>
    <property type="resolution" value="1.46 A"/>
    <property type="chains" value="A=6-306"/>
</dbReference>
<dbReference type="PDB" id="7P8U">
    <property type="method" value="X-ray"/>
    <property type="resolution" value="1.60 A"/>
    <property type="chains" value="A=6-306"/>
</dbReference>
<dbReference type="PDB" id="7P8X">
    <property type="method" value="X-ray"/>
    <property type="resolution" value="1.40 A"/>
    <property type="chains" value="A=6-306"/>
</dbReference>
<dbReference type="PDB" id="7P93">
    <property type="method" value="X-ray"/>
    <property type="resolution" value="1.55 A"/>
    <property type="chains" value="A=6-306"/>
</dbReference>
<dbReference type="PDB" id="7T82">
    <property type="method" value="X-ray"/>
    <property type="resolution" value="3.50 A"/>
    <property type="chains" value="A/B=23-306"/>
</dbReference>
<dbReference type="PDBsum" id="3ROH"/>
<dbReference type="PDBsum" id="7P8S"/>
<dbReference type="PDBsum" id="7P8T"/>
<dbReference type="PDBsum" id="7P8U"/>
<dbReference type="PDBsum" id="7P8X"/>
<dbReference type="PDBsum" id="7P93"/>
<dbReference type="PDBsum" id="7T82"/>
<dbReference type="SMR" id="Q2FXB0"/>
<dbReference type="PaxDb" id="1280-SAXN108_1857"/>
<dbReference type="GeneID" id="3920900"/>
<dbReference type="KEGG" id="sao:SAOUHSC_01955"/>
<dbReference type="PATRIC" id="fig|93061.5.peg.1780"/>
<dbReference type="eggNOG" id="ENOG5030531">
    <property type="taxonomic scope" value="Bacteria"/>
</dbReference>
<dbReference type="HOGENOM" id="CLU_075311_0_0_9"/>
<dbReference type="OrthoDB" id="2402866at2"/>
<dbReference type="EvolutionaryTrace" id="Q2FXB0"/>
<dbReference type="Proteomes" id="UP000008816">
    <property type="component" value="Chromosome"/>
</dbReference>
<dbReference type="GO" id="GO:0005576">
    <property type="term" value="C:extracellular region"/>
    <property type="evidence" value="ECO:0007669"/>
    <property type="project" value="UniProtKB-SubCell"/>
</dbReference>
<dbReference type="GO" id="GO:0090729">
    <property type="term" value="F:toxin activity"/>
    <property type="evidence" value="ECO:0007669"/>
    <property type="project" value="UniProtKB-KW"/>
</dbReference>
<dbReference type="GO" id="GO:0051715">
    <property type="term" value="P:cytolysis in another organism"/>
    <property type="evidence" value="ECO:0007669"/>
    <property type="project" value="InterPro"/>
</dbReference>
<dbReference type="Gene3D" id="2.70.240.10">
    <property type="entry name" value="Leukocidin/porin MspA"/>
    <property type="match status" value="1"/>
</dbReference>
<dbReference type="InterPro" id="IPR003963">
    <property type="entry name" value="Bi-component_toxin_staph"/>
</dbReference>
<dbReference type="InterPro" id="IPR016183">
    <property type="entry name" value="Leukocidin/Hemolysin_toxin"/>
</dbReference>
<dbReference type="InterPro" id="IPR036435">
    <property type="entry name" value="Leukocidin/porin_MspA_sf"/>
</dbReference>
<dbReference type="NCBIfam" id="TIGR01002">
    <property type="entry name" value="hlyII"/>
    <property type="match status" value="1"/>
</dbReference>
<dbReference type="Pfam" id="PF07968">
    <property type="entry name" value="Leukocidin"/>
    <property type="match status" value="1"/>
</dbReference>
<dbReference type="PRINTS" id="PR01468">
    <property type="entry name" value="BICOMPNTOXIN"/>
</dbReference>
<dbReference type="SUPFAM" id="SSF56959">
    <property type="entry name" value="Leukocidin-like"/>
    <property type="match status" value="1"/>
</dbReference>
<comment type="function">
    <text evidence="3">Part of a bi-component leucotoxin that acts by forming pores in the membrane of the target cells. The activity of LukEv-LukDv to rabbit leukocytes is similar to that of the Panton-Valentine leucocidin (PVL). LukEv-LukDv is hemolytic to rabbit red blood cells although the activity is only 8% of gamma-hemolysin.</text>
</comment>
<comment type="subunit">
    <text evidence="1 3">Toxicity requires sequential binding and synergistic association of a class S and a class F component which form heterooligomeric complexes (By similarity). LukEv (class S) associates with LukDv (class F).</text>
</comment>
<comment type="subcellular location">
    <subcellularLocation>
        <location evidence="1">Secreted</location>
    </subcellularLocation>
</comment>
<comment type="similarity">
    <text evidence="4">Belongs to the aerolysin family.</text>
</comment>
<comment type="sequence caution" evidence="4">
    <conflict type="erroneous initiation">
        <sequence resource="EMBL-CDS" id="ABD31016"/>
    </conflict>
    <text>Truncated N-terminus.</text>
</comment>
<keyword id="KW-0002">3D-structure</keyword>
<keyword id="KW-0204">Cytolysis</keyword>
<keyword id="KW-0354">Hemolysis</keyword>
<keyword id="KW-1185">Reference proteome</keyword>
<keyword id="KW-0964">Secreted</keyword>
<keyword id="KW-0732">Signal</keyword>
<keyword id="KW-0800">Toxin</keyword>
<keyword id="KW-0843">Virulence</keyword>
<proteinExistence type="evidence at protein level"/>